<comment type="function">
    <text evidence="1">One of the primary rRNA binding proteins, it binds directly to 16S rRNA where it nucleates assembly of the head domain of the 30S subunit. Is located at the subunit interface close to the decoding center, probably blocks exit of the E-site tRNA.</text>
</comment>
<comment type="subunit">
    <text evidence="1">Part of the 30S ribosomal subunit. Contacts proteins S9 and S11.</text>
</comment>
<comment type="similarity">
    <text evidence="1">Belongs to the universal ribosomal protein uS7 family.</text>
</comment>
<reference key="1">
    <citation type="journal article" date="2005" name="PLoS Biol.">
        <title>Major structural differences and novel potential virulence mechanisms from the genomes of multiple Campylobacter species.</title>
        <authorList>
            <person name="Fouts D.E."/>
            <person name="Mongodin E.F."/>
            <person name="Mandrell R.E."/>
            <person name="Miller W.G."/>
            <person name="Rasko D.A."/>
            <person name="Ravel J."/>
            <person name="Brinkac L.M."/>
            <person name="DeBoy R.T."/>
            <person name="Parker C.T."/>
            <person name="Daugherty S.C."/>
            <person name="Dodson R.J."/>
            <person name="Durkin A.S."/>
            <person name="Madupu R."/>
            <person name="Sullivan S.A."/>
            <person name="Shetty J.U."/>
            <person name="Ayodeji M.A."/>
            <person name="Shvartsbeyn A."/>
            <person name="Schatz M.C."/>
            <person name="Badger J.H."/>
            <person name="Fraser C.M."/>
            <person name="Nelson K.E."/>
        </authorList>
    </citation>
    <scope>NUCLEOTIDE SEQUENCE [LARGE SCALE GENOMIC DNA]</scope>
    <source>
        <strain>RM1221</strain>
    </source>
</reference>
<proteinExistence type="inferred from homology"/>
<feature type="chain" id="PRO_0000226488" description="Small ribosomal subunit protein uS7">
    <location>
        <begin position="1"/>
        <end position="156"/>
    </location>
</feature>
<keyword id="KW-0687">Ribonucleoprotein</keyword>
<keyword id="KW-0689">Ribosomal protein</keyword>
<keyword id="KW-0694">RNA-binding</keyword>
<keyword id="KW-0699">rRNA-binding</keyword>
<keyword id="KW-0820">tRNA-binding</keyword>
<evidence type="ECO:0000255" key="1">
    <source>
        <dbReference type="HAMAP-Rule" id="MF_00480"/>
    </source>
</evidence>
<evidence type="ECO:0000305" key="2"/>
<name>RS7_CAMJR</name>
<sequence>MRRRKAPVREVLPDPIYGNKVITKFINSLMYDGKKSTATTIMYGALEAIDKKGGEKKGIDIFNDAIENIKPLLEVKSRRVGGATYQVPVEVRPARQQALAIRWIISFARKRSERTMIDKLAAELLDAANSKGASFKKKEDTYKMAEANKAFAHYRW</sequence>
<dbReference type="EMBL" id="CP000025">
    <property type="protein sequence ID" value="AAW35127.1"/>
    <property type="molecule type" value="Genomic_DNA"/>
</dbReference>
<dbReference type="RefSeq" id="WP_002779471.1">
    <property type="nucleotide sequence ID" value="NC_003912.7"/>
</dbReference>
<dbReference type="SMR" id="Q5HVX7"/>
<dbReference type="KEGG" id="cjr:CJE0541"/>
<dbReference type="HOGENOM" id="CLU_072226_1_1_7"/>
<dbReference type="GO" id="GO:0015935">
    <property type="term" value="C:small ribosomal subunit"/>
    <property type="evidence" value="ECO:0007669"/>
    <property type="project" value="InterPro"/>
</dbReference>
<dbReference type="GO" id="GO:0019843">
    <property type="term" value="F:rRNA binding"/>
    <property type="evidence" value="ECO:0007669"/>
    <property type="project" value="UniProtKB-UniRule"/>
</dbReference>
<dbReference type="GO" id="GO:0003735">
    <property type="term" value="F:structural constituent of ribosome"/>
    <property type="evidence" value="ECO:0007669"/>
    <property type="project" value="InterPro"/>
</dbReference>
<dbReference type="GO" id="GO:0000049">
    <property type="term" value="F:tRNA binding"/>
    <property type="evidence" value="ECO:0007669"/>
    <property type="project" value="UniProtKB-UniRule"/>
</dbReference>
<dbReference type="GO" id="GO:0006412">
    <property type="term" value="P:translation"/>
    <property type="evidence" value="ECO:0007669"/>
    <property type="project" value="UniProtKB-UniRule"/>
</dbReference>
<dbReference type="CDD" id="cd14869">
    <property type="entry name" value="uS7_Bacteria"/>
    <property type="match status" value="1"/>
</dbReference>
<dbReference type="FunFam" id="1.10.455.10:FF:000001">
    <property type="entry name" value="30S ribosomal protein S7"/>
    <property type="match status" value="1"/>
</dbReference>
<dbReference type="Gene3D" id="1.10.455.10">
    <property type="entry name" value="Ribosomal protein S7 domain"/>
    <property type="match status" value="1"/>
</dbReference>
<dbReference type="HAMAP" id="MF_00480_B">
    <property type="entry name" value="Ribosomal_uS7_B"/>
    <property type="match status" value="1"/>
</dbReference>
<dbReference type="InterPro" id="IPR000235">
    <property type="entry name" value="Ribosomal_uS7"/>
</dbReference>
<dbReference type="InterPro" id="IPR005717">
    <property type="entry name" value="Ribosomal_uS7_bac/org-type"/>
</dbReference>
<dbReference type="InterPro" id="IPR020606">
    <property type="entry name" value="Ribosomal_uS7_CS"/>
</dbReference>
<dbReference type="InterPro" id="IPR023798">
    <property type="entry name" value="Ribosomal_uS7_dom"/>
</dbReference>
<dbReference type="InterPro" id="IPR036823">
    <property type="entry name" value="Ribosomal_uS7_dom_sf"/>
</dbReference>
<dbReference type="NCBIfam" id="TIGR01029">
    <property type="entry name" value="rpsG_bact"/>
    <property type="match status" value="1"/>
</dbReference>
<dbReference type="PANTHER" id="PTHR11205">
    <property type="entry name" value="RIBOSOMAL PROTEIN S7"/>
    <property type="match status" value="1"/>
</dbReference>
<dbReference type="Pfam" id="PF00177">
    <property type="entry name" value="Ribosomal_S7"/>
    <property type="match status" value="1"/>
</dbReference>
<dbReference type="PIRSF" id="PIRSF002122">
    <property type="entry name" value="RPS7p_RPS7a_RPS5e_RPS7o"/>
    <property type="match status" value="1"/>
</dbReference>
<dbReference type="SUPFAM" id="SSF47973">
    <property type="entry name" value="Ribosomal protein S7"/>
    <property type="match status" value="1"/>
</dbReference>
<dbReference type="PROSITE" id="PS00052">
    <property type="entry name" value="RIBOSOMAL_S7"/>
    <property type="match status" value="1"/>
</dbReference>
<gene>
    <name evidence="1" type="primary">rpsG</name>
    <name type="ordered locus">CJE0541</name>
</gene>
<organism>
    <name type="scientific">Campylobacter jejuni (strain RM1221)</name>
    <dbReference type="NCBI Taxonomy" id="195099"/>
    <lineage>
        <taxon>Bacteria</taxon>
        <taxon>Pseudomonadati</taxon>
        <taxon>Campylobacterota</taxon>
        <taxon>Epsilonproteobacteria</taxon>
        <taxon>Campylobacterales</taxon>
        <taxon>Campylobacteraceae</taxon>
        <taxon>Campylobacter</taxon>
    </lineage>
</organism>
<accession>Q5HVX7</accession>
<protein>
    <recommendedName>
        <fullName evidence="1">Small ribosomal subunit protein uS7</fullName>
    </recommendedName>
    <alternativeName>
        <fullName evidence="2">30S ribosomal protein S7</fullName>
    </alternativeName>
</protein>